<protein>
    <recommendedName>
        <fullName>mRNA 3'-end-processing protein RNA14</fullName>
    </recommendedName>
</protein>
<reference key="1">
    <citation type="journal article" date="2004" name="Proc. Natl. Acad. Sci. U.S.A.">
        <title>The diploid genome sequence of Candida albicans.</title>
        <authorList>
            <person name="Jones T."/>
            <person name="Federspiel N.A."/>
            <person name="Chibana H."/>
            <person name="Dungan J."/>
            <person name="Kalman S."/>
            <person name="Magee B.B."/>
            <person name="Newport G."/>
            <person name="Thorstenson Y.R."/>
            <person name="Agabian N."/>
            <person name="Magee P.T."/>
            <person name="Davis R.W."/>
            <person name="Scherer S."/>
        </authorList>
    </citation>
    <scope>NUCLEOTIDE SEQUENCE [LARGE SCALE GENOMIC DNA]</scope>
    <source>
        <strain>SC5314 / ATCC MYA-2876</strain>
    </source>
</reference>
<reference key="2">
    <citation type="journal article" date="2007" name="Genome Biol.">
        <title>Assembly of the Candida albicans genome into sixteen supercontigs aligned on the eight chromosomes.</title>
        <authorList>
            <person name="van het Hoog M."/>
            <person name="Rast T.J."/>
            <person name="Martchenko M."/>
            <person name="Grindle S."/>
            <person name="Dignard D."/>
            <person name="Hogues H."/>
            <person name="Cuomo C."/>
            <person name="Berriman M."/>
            <person name="Scherer S."/>
            <person name="Magee B.B."/>
            <person name="Whiteway M."/>
            <person name="Chibana H."/>
            <person name="Nantel A."/>
            <person name="Magee P.T."/>
        </authorList>
    </citation>
    <scope>GENOME REANNOTATION</scope>
    <source>
        <strain>SC5314 / ATCC MYA-2876</strain>
    </source>
</reference>
<reference key="3">
    <citation type="journal article" date="2013" name="Genome Biol.">
        <title>Assembly of a phased diploid Candida albicans genome facilitates allele-specific measurements and provides a simple model for repeat and indel structure.</title>
        <authorList>
            <person name="Muzzey D."/>
            <person name="Schwartz K."/>
            <person name="Weissman J.S."/>
            <person name="Sherlock G."/>
        </authorList>
    </citation>
    <scope>NUCLEOTIDE SEQUENCE [LARGE SCALE GENOMIC DNA]</scope>
    <scope>GENOME REANNOTATION</scope>
    <source>
        <strain>SC5314 / ATCC MYA-2876</strain>
    </source>
</reference>
<name>RNA14_CANAL</name>
<keyword id="KW-0963">Cytoplasm</keyword>
<keyword id="KW-0507">mRNA processing</keyword>
<keyword id="KW-0539">Nucleus</keyword>
<keyword id="KW-1185">Reference proteome</keyword>
<keyword id="KW-0677">Repeat</keyword>
<gene>
    <name type="primary">RNA14</name>
    <name type="ordered locus">CAALFM_C202150CA</name>
    <name type="ORF">CaO19.1531</name>
    <name type="ORF">CaO19.9106</name>
</gene>
<comment type="function">
    <text evidence="1">Component of the cleavage factor IA (CFIA) complex, which is involved in the endonucleolytic cleavage during polyadenylation-dependent pre-mRNA 3'-end formation.</text>
</comment>
<comment type="subcellular location">
    <subcellularLocation>
        <location evidence="1">Nucleus</location>
    </subcellularLocation>
    <subcellularLocation>
        <location evidence="1">Cytoplasm</location>
    </subcellularLocation>
    <text evidence="1">Nucleus and/or cytoplasm.</text>
</comment>
<feature type="chain" id="PRO_0000238520" description="mRNA 3'-end-processing protein RNA14">
    <location>
        <begin position="1"/>
        <end position="791"/>
    </location>
</feature>
<feature type="repeat" description="HAT 1">
    <location>
        <begin position="44"/>
        <end position="76"/>
    </location>
</feature>
<feature type="repeat" description="HAT 2">
    <location>
        <begin position="78"/>
        <end position="112"/>
    </location>
</feature>
<feature type="repeat" description="HAT 3">
    <location>
        <begin position="119"/>
        <end position="154"/>
    </location>
</feature>
<feature type="repeat" description="HAT 4">
    <location>
        <begin position="165"/>
        <end position="198"/>
    </location>
</feature>
<feature type="repeat" description="HAT 5">
    <location>
        <begin position="231"/>
        <end position="263"/>
    </location>
</feature>
<feature type="repeat" description="HAT 6">
    <location>
        <begin position="273"/>
        <end position="305"/>
    </location>
</feature>
<feature type="region of interest" description="Disordered" evidence="2">
    <location>
        <begin position="379"/>
        <end position="449"/>
    </location>
</feature>
<feature type="region of interest" description="Disordered" evidence="2">
    <location>
        <begin position="725"/>
        <end position="745"/>
    </location>
</feature>
<feature type="compositionally biased region" description="Basic and acidic residues" evidence="2">
    <location>
        <begin position="379"/>
        <end position="388"/>
    </location>
</feature>
<feature type="compositionally biased region" description="Acidic residues" evidence="2">
    <location>
        <begin position="389"/>
        <end position="411"/>
    </location>
</feature>
<feature type="compositionally biased region" description="Low complexity" evidence="2">
    <location>
        <begin position="427"/>
        <end position="442"/>
    </location>
</feature>
<sequence>MFIPQNKSKRLSLDKIGQLEEDLELNPLDYNKWQKLIDQLIIKDNQEQVRNTFDKYLKIFKFDGASWCKYIKYELNRDEKEKVENLFQQCLGITDNVELCRLYVDYVRGVTDFVTGGEKARGVVVQAFEFAINKVGIDITSESLWQDYIQFLQSWNPNANWEQQQKIDLIRKVYKKFLTIPTENIEVSWSQYTKWENELNPATASKFISEKSGEFMLARSWNTEFNRITDKSLKRNLNPGDHNDEDVVKQLKYWLRWLELEKENKLELKDETVNDKRIQYVYKQATYALPFVPEIWFQYVKYLLVQNEEGNLQESIRLLKEGGLVLNPKSMLLTFQLAELYERDNSFNNAKIVFKNLLDALQKDYNSVANQIAELKERIDPATDKDNIQEDDDDNEEEEEEENDNDNDNDNGGDSKQQPPSKKLKLNPNGGQNGSNSENNGEAVSAPSSSVKLPQVYRISLADSKQLLSFENEQKRLSDAITLTYVKFMIASKRSEGIKEARNVFKQARKFTDIGYQIFIESALLEHYSDKKSTALKIFDLGKKNFATNGKFLLNYLDYLIMINDVDTMRTVIQSSDANFTKEIGNLQEELKLTNLDPITRKKLEKQITNLKKFLKQLYKKYISFAATFLSLDVTHSFAKKCEQLFPKDDPIDLFTDRYKLDNINIIKKDELGRDDILTSFDGIIDEEELQRLKRRKLSNGSGSSSSYSFNEEESKSAIKNIEEQKTRVQQEQDQENQGINKPEESFVGPSIIALMSALPNASYFGLPSESVFNSEKLVTLFANLSNIPSQ</sequence>
<organism>
    <name type="scientific">Candida albicans (strain SC5314 / ATCC MYA-2876)</name>
    <name type="common">Yeast</name>
    <dbReference type="NCBI Taxonomy" id="237561"/>
    <lineage>
        <taxon>Eukaryota</taxon>
        <taxon>Fungi</taxon>
        <taxon>Dikarya</taxon>
        <taxon>Ascomycota</taxon>
        <taxon>Saccharomycotina</taxon>
        <taxon>Pichiomycetes</taxon>
        <taxon>Debaryomycetaceae</taxon>
        <taxon>Candida/Lodderomyces clade</taxon>
        <taxon>Candida</taxon>
    </lineage>
</organism>
<proteinExistence type="inferred from homology"/>
<evidence type="ECO:0000250" key="1"/>
<evidence type="ECO:0000256" key="2">
    <source>
        <dbReference type="SAM" id="MobiDB-lite"/>
    </source>
</evidence>
<accession>Q5AM44</accession>
<accession>A0A1D8PGK2</accession>
<accession>Q5ALP5</accession>
<dbReference type="EMBL" id="CP017624">
    <property type="protein sequence ID" value="AOW27255.1"/>
    <property type="molecule type" value="Genomic_DNA"/>
</dbReference>
<dbReference type="RefSeq" id="XP_722575.2">
    <property type="nucleotide sequence ID" value="XM_717482.2"/>
</dbReference>
<dbReference type="SMR" id="Q5AM44"/>
<dbReference type="FunCoup" id="Q5AM44">
    <property type="interactions" value="1238"/>
</dbReference>
<dbReference type="STRING" id="237561.Q5AM44"/>
<dbReference type="EnsemblFungi" id="C2_02150C_A-T">
    <property type="protein sequence ID" value="C2_02150C_A-T-p1"/>
    <property type="gene ID" value="C2_02150C_A"/>
</dbReference>
<dbReference type="GeneID" id="3635749"/>
<dbReference type="KEGG" id="cal:CAALFM_C202150CA"/>
<dbReference type="CGD" id="CAL0000183478">
    <property type="gene designation" value="orf19.9106"/>
</dbReference>
<dbReference type="VEuPathDB" id="FungiDB:C2_02150C_A"/>
<dbReference type="eggNOG" id="KOG1914">
    <property type="taxonomic scope" value="Eukaryota"/>
</dbReference>
<dbReference type="HOGENOM" id="CLU_007630_0_1_1"/>
<dbReference type="InParanoid" id="Q5AM44"/>
<dbReference type="OrthoDB" id="26282at2759"/>
<dbReference type="PRO" id="PR:Q5AM44"/>
<dbReference type="Proteomes" id="UP000000559">
    <property type="component" value="Chromosome 2"/>
</dbReference>
<dbReference type="GO" id="GO:0005737">
    <property type="term" value="C:cytoplasm"/>
    <property type="evidence" value="ECO:0007669"/>
    <property type="project" value="UniProtKB-SubCell"/>
</dbReference>
<dbReference type="GO" id="GO:0005634">
    <property type="term" value="C:nucleus"/>
    <property type="evidence" value="ECO:0000318"/>
    <property type="project" value="GO_Central"/>
</dbReference>
<dbReference type="GO" id="GO:0003729">
    <property type="term" value="F:mRNA binding"/>
    <property type="evidence" value="ECO:0000318"/>
    <property type="project" value="GO_Central"/>
</dbReference>
<dbReference type="GO" id="GO:0031124">
    <property type="term" value="P:mRNA 3'-end processing"/>
    <property type="evidence" value="ECO:0007669"/>
    <property type="project" value="InterPro"/>
</dbReference>
<dbReference type="GO" id="GO:0031123">
    <property type="term" value="P:RNA 3'-end processing"/>
    <property type="evidence" value="ECO:0000318"/>
    <property type="project" value="GO_Central"/>
</dbReference>
<dbReference type="FunFam" id="1.25.40.1040:FF:000023">
    <property type="entry name" value="mRNA 3'-end-processing protein RNA14"/>
    <property type="match status" value="1"/>
</dbReference>
<dbReference type="FunFam" id="1.25.40.1040:FF:000035">
    <property type="entry name" value="mRNA 3'-end-processing protein RNA14"/>
    <property type="match status" value="1"/>
</dbReference>
<dbReference type="Gene3D" id="1.25.40.1040">
    <property type="match status" value="2"/>
</dbReference>
<dbReference type="InterPro" id="IPR003107">
    <property type="entry name" value="HAT"/>
</dbReference>
<dbReference type="InterPro" id="IPR045243">
    <property type="entry name" value="Rna14-like"/>
</dbReference>
<dbReference type="InterPro" id="IPR008847">
    <property type="entry name" value="Suf"/>
</dbReference>
<dbReference type="InterPro" id="IPR011990">
    <property type="entry name" value="TPR-like_helical_dom_sf"/>
</dbReference>
<dbReference type="PANTHER" id="PTHR19980:SF0">
    <property type="entry name" value="CLEAVAGE STIMULATION FACTOR SUBUNIT 3"/>
    <property type="match status" value="1"/>
</dbReference>
<dbReference type="PANTHER" id="PTHR19980">
    <property type="entry name" value="RNA CLEAVAGE STIMULATION FACTOR"/>
    <property type="match status" value="1"/>
</dbReference>
<dbReference type="Pfam" id="PF05843">
    <property type="entry name" value="Suf"/>
    <property type="match status" value="1"/>
</dbReference>
<dbReference type="SMART" id="SM00386">
    <property type="entry name" value="HAT"/>
    <property type="match status" value="7"/>
</dbReference>
<dbReference type="SUPFAM" id="SSF48452">
    <property type="entry name" value="TPR-like"/>
    <property type="match status" value="2"/>
</dbReference>